<name>DEF2_NITEU</name>
<gene>
    <name evidence="1" type="primary">def2</name>
    <name type="ordered locus">NE1970</name>
</gene>
<proteinExistence type="inferred from homology"/>
<evidence type="ECO:0000255" key="1">
    <source>
        <dbReference type="HAMAP-Rule" id="MF_00163"/>
    </source>
</evidence>
<accession>Q82TC8</accession>
<organism>
    <name type="scientific">Nitrosomonas europaea (strain ATCC 19718 / CIP 103999 / KCTC 2705 / NBRC 14298)</name>
    <dbReference type="NCBI Taxonomy" id="228410"/>
    <lineage>
        <taxon>Bacteria</taxon>
        <taxon>Pseudomonadati</taxon>
        <taxon>Pseudomonadota</taxon>
        <taxon>Betaproteobacteria</taxon>
        <taxon>Nitrosomonadales</taxon>
        <taxon>Nitrosomonadaceae</taxon>
        <taxon>Nitrosomonas</taxon>
    </lineage>
</organism>
<protein>
    <recommendedName>
        <fullName evidence="1">Peptide deformylase 2</fullName>
        <shortName evidence="1">PDF 2</shortName>
        <ecNumber evidence="1">3.5.1.88</ecNumber>
    </recommendedName>
    <alternativeName>
        <fullName evidence="1">Polypeptide deformylase 2</fullName>
    </alternativeName>
</protein>
<comment type="function">
    <text evidence="1">Removes the formyl group from the N-terminal Met of newly synthesized proteins. Requires at least a dipeptide for an efficient rate of reaction. N-terminal L-methionine is a prerequisite for activity but the enzyme has broad specificity at other positions.</text>
</comment>
<comment type="catalytic activity">
    <reaction evidence="1">
        <text>N-terminal N-formyl-L-methionyl-[peptide] + H2O = N-terminal L-methionyl-[peptide] + formate</text>
        <dbReference type="Rhea" id="RHEA:24420"/>
        <dbReference type="Rhea" id="RHEA-COMP:10639"/>
        <dbReference type="Rhea" id="RHEA-COMP:10640"/>
        <dbReference type="ChEBI" id="CHEBI:15377"/>
        <dbReference type="ChEBI" id="CHEBI:15740"/>
        <dbReference type="ChEBI" id="CHEBI:49298"/>
        <dbReference type="ChEBI" id="CHEBI:64731"/>
        <dbReference type="EC" id="3.5.1.88"/>
    </reaction>
</comment>
<comment type="cofactor">
    <cofactor evidence="1">
        <name>Fe(2+)</name>
        <dbReference type="ChEBI" id="CHEBI:29033"/>
    </cofactor>
    <text evidence="1">Binds 1 Fe(2+) ion.</text>
</comment>
<comment type="similarity">
    <text evidence="1">Belongs to the polypeptide deformylase family.</text>
</comment>
<dbReference type="EC" id="3.5.1.88" evidence="1"/>
<dbReference type="EMBL" id="AL954747">
    <property type="protein sequence ID" value="CAD85881.1"/>
    <property type="molecule type" value="Genomic_DNA"/>
</dbReference>
<dbReference type="SMR" id="Q82TC8"/>
<dbReference type="STRING" id="228410.NE1970"/>
<dbReference type="KEGG" id="neu:NE1970"/>
<dbReference type="eggNOG" id="COG0242">
    <property type="taxonomic scope" value="Bacteria"/>
</dbReference>
<dbReference type="HOGENOM" id="CLU_061901_2_1_4"/>
<dbReference type="PhylomeDB" id="Q82TC8"/>
<dbReference type="Proteomes" id="UP000001416">
    <property type="component" value="Chromosome"/>
</dbReference>
<dbReference type="GO" id="GO:0046872">
    <property type="term" value="F:metal ion binding"/>
    <property type="evidence" value="ECO:0007669"/>
    <property type="project" value="UniProtKB-KW"/>
</dbReference>
<dbReference type="GO" id="GO:0042586">
    <property type="term" value="F:peptide deformylase activity"/>
    <property type="evidence" value="ECO:0007669"/>
    <property type="project" value="UniProtKB-UniRule"/>
</dbReference>
<dbReference type="GO" id="GO:0043686">
    <property type="term" value="P:co-translational protein modification"/>
    <property type="evidence" value="ECO:0007669"/>
    <property type="project" value="TreeGrafter"/>
</dbReference>
<dbReference type="GO" id="GO:0006412">
    <property type="term" value="P:translation"/>
    <property type="evidence" value="ECO:0007669"/>
    <property type="project" value="UniProtKB-UniRule"/>
</dbReference>
<dbReference type="CDD" id="cd00487">
    <property type="entry name" value="Pep_deformylase"/>
    <property type="match status" value="1"/>
</dbReference>
<dbReference type="FunFam" id="3.90.45.10:FF:000001">
    <property type="entry name" value="Peptide deformylase"/>
    <property type="match status" value="1"/>
</dbReference>
<dbReference type="Gene3D" id="3.90.45.10">
    <property type="entry name" value="Peptide deformylase"/>
    <property type="match status" value="1"/>
</dbReference>
<dbReference type="HAMAP" id="MF_00163">
    <property type="entry name" value="Pep_deformylase"/>
    <property type="match status" value="1"/>
</dbReference>
<dbReference type="InterPro" id="IPR023635">
    <property type="entry name" value="Peptide_deformylase"/>
</dbReference>
<dbReference type="InterPro" id="IPR036821">
    <property type="entry name" value="Peptide_deformylase_sf"/>
</dbReference>
<dbReference type="NCBIfam" id="TIGR00079">
    <property type="entry name" value="pept_deformyl"/>
    <property type="match status" value="1"/>
</dbReference>
<dbReference type="NCBIfam" id="NF001159">
    <property type="entry name" value="PRK00150.1-3"/>
    <property type="match status" value="1"/>
</dbReference>
<dbReference type="PANTHER" id="PTHR10458">
    <property type="entry name" value="PEPTIDE DEFORMYLASE"/>
    <property type="match status" value="1"/>
</dbReference>
<dbReference type="PANTHER" id="PTHR10458:SF21">
    <property type="entry name" value="PEPTIDE DEFORMYLASE"/>
    <property type="match status" value="1"/>
</dbReference>
<dbReference type="Pfam" id="PF01327">
    <property type="entry name" value="Pep_deformylase"/>
    <property type="match status" value="1"/>
</dbReference>
<dbReference type="PIRSF" id="PIRSF004749">
    <property type="entry name" value="Pep_def"/>
    <property type="match status" value="1"/>
</dbReference>
<dbReference type="PRINTS" id="PR01576">
    <property type="entry name" value="PDEFORMYLASE"/>
</dbReference>
<dbReference type="SUPFAM" id="SSF56420">
    <property type="entry name" value="Peptide deformylase"/>
    <property type="match status" value="1"/>
</dbReference>
<keyword id="KW-0378">Hydrolase</keyword>
<keyword id="KW-0408">Iron</keyword>
<keyword id="KW-0479">Metal-binding</keyword>
<keyword id="KW-0648">Protein biosynthesis</keyword>
<keyword id="KW-1185">Reference proteome</keyword>
<sequence>MIEPLPRILVSELCKFVMAILNILRYPDERLHKIATEVPSITREIRTLVSNMAETMYAAPGIGLAATQVDVHQRIIVIDVSETRDELLVLINPEIIASSGNAETQEGCLSVPGIFDKVTRAEEVTVRATGIDGKSFEMDASGLLAVCIQHEMDHLMGKVFVEYLSPFKQSRILSKLKKQARRQIA</sequence>
<reference key="1">
    <citation type="journal article" date="2003" name="J. Bacteriol.">
        <title>Complete genome sequence of the ammonia-oxidizing bacterium and obligate chemolithoautotroph Nitrosomonas europaea.</title>
        <authorList>
            <person name="Chain P."/>
            <person name="Lamerdin J.E."/>
            <person name="Larimer F.W."/>
            <person name="Regala W."/>
            <person name="Lao V."/>
            <person name="Land M.L."/>
            <person name="Hauser L."/>
            <person name="Hooper A.B."/>
            <person name="Klotz M.G."/>
            <person name="Norton J."/>
            <person name="Sayavedra-Soto L.A."/>
            <person name="Arciero D.M."/>
            <person name="Hommes N.G."/>
            <person name="Whittaker M.M."/>
            <person name="Arp D.J."/>
        </authorList>
    </citation>
    <scope>NUCLEOTIDE SEQUENCE [LARGE SCALE GENOMIC DNA]</scope>
    <source>
        <strain>ATCC 19718 / CIP 103999 / KCTC 2705 / NBRC 14298</strain>
    </source>
</reference>
<feature type="chain" id="PRO_0000082810" description="Peptide deformylase 2">
    <location>
        <begin position="1"/>
        <end position="185"/>
    </location>
</feature>
<feature type="active site" evidence="1">
    <location>
        <position position="151"/>
    </location>
</feature>
<feature type="binding site" evidence="1">
    <location>
        <position position="108"/>
    </location>
    <ligand>
        <name>Fe cation</name>
        <dbReference type="ChEBI" id="CHEBI:24875"/>
    </ligand>
</feature>
<feature type="binding site" evidence="1">
    <location>
        <position position="150"/>
    </location>
    <ligand>
        <name>Fe cation</name>
        <dbReference type="ChEBI" id="CHEBI:24875"/>
    </ligand>
</feature>
<feature type="binding site" evidence="1">
    <location>
        <position position="154"/>
    </location>
    <ligand>
        <name>Fe cation</name>
        <dbReference type="ChEBI" id="CHEBI:24875"/>
    </ligand>
</feature>